<organism>
    <name type="scientific">Escherichia phage lambda</name>
    <name type="common">Bacteriophage lambda</name>
    <dbReference type="NCBI Taxonomy" id="2681611"/>
    <lineage>
        <taxon>Viruses</taxon>
        <taxon>Duplodnaviria</taxon>
        <taxon>Heunggongvirae</taxon>
        <taxon>Uroviricota</taxon>
        <taxon>Caudoviricetes</taxon>
        <taxon>Lambdavirus</taxon>
        <taxon>Lambdavirus lambda</taxon>
    </lineage>
</organism>
<feature type="chain" id="PRO_0000077672" description="Tail completion protein Z">
    <location>
        <begin position="1"/>
        <end position="192"/>
    </location>
</feature>
<name>COMPL_LAMBD</name>
<accession>P03731</accession>
<proteinExistence type="inferred from homology"/>
<sequence length="192" mass="21561">MAIKGLEQAVENLSRISKTAVPGAAAMAINRVASSAISQSASQVARETKVRRKLVKERARLKRATVKNPQARIKVNRGDLPVIKLGNARVVLSRRRRRKKGQRSSLKGGGSVLVVGNRRIPGAFIQQLKNGRWHVMQRVAGKNRYPIDVVKIPMAVPLTTAFKQNIERIRRERLPKELGYALQHQLRMVIKR</sequence>
<gene>
    <name type="primary">Z</name>
    <name type="ordered locus">lambdap11</name>
</gene>
<evidence type="ECO:0000269" key="1">
    <source>
    </source>
</evidence>
<evidence type="ECO:0000305" key="2"/>
<keyword id="KW-1035">Host cytoplasm</keyword>
<keyword id="KW-0426">Late protein</keyword>
<keyword id="KW-1185">Reference proteome</keyword>
<keyword id="KW-1227">Viral tail protein</keyword>
<keyword id="KW-0946">Virion</keyword>
<comment type="function">
    <text evidence="2">Stabilizes the tail structure and acts as a connector between the end of tail and the portal vertex of the capsid.</text>
</comment>
<comment type="subcellular location">
    <subcellularLocation>
        <location evidence="1">Virion</location>
    </subcellularLocation>
    <subcellularLocation>
        <location evidence="1">Host cytoplasm</location>
    </subcellularLocation>
</comment>
<comment type="similarity">
    <text evidence="2">Belongs to the Lambdalikevirus tail completion protein family.</text>
</comment>
<dbReference type="EMBL" id="J02459">
    <property type="protein sequence ID" value="AAA96543.1"/>
    <property type="molecule type" value="Genomic_DNA"/>
</dbReference>
<dbReference type="PIR" id="B43008">
    <property type="entry name" value="TLBPZL"/>
</dbReference>
<dbReference type="RefSeq" id="NP_040590.1">
    <property type="nucleotide sequence ID" value="NC_001416.1"/>
</dbReference>
<dbReference type="IntAct" id="P03731">
    <property type="interactions" value="1"/>
</dbReference>
<dbReference type="GeneID" id="2703485"/>
<dbReference type="KEGG" id="vg:2703485"/>
<dbReference type="Proteomes" id="UP000001711">
    <property type="component" value="Genome"/>
</dbReference>
<dbReference type="GO" id="GO:0030430">
    <property type="term" value="C:host cell cytoplasm"/>
    <property type="evidence" value="ECO:0007669"/>
    <property type="project" value="UniProtKB-SubCell"/>
</dbReference>
<dbReference type="GO" id="GO:0098015">
    <property type="term" value="C:virus tail"/>
    <property type="evidence" value="ECO:0000314"/>
    <property type="project" value="UniProtKB"/>
</dbReference>
<dbReference type="InterPro" id="IPR010633">
    <property type="entry name" value="Phage_lambda_GpZ"/>
</dbReference>
<dbReference type="Pfam" id="PF06763">
    <property type="entry name" value="Minor_tail_Z"/>
    <property type="match status" value="1"/>
</dbReference>
<dbReference type="PIRSF" id="PIRSF004395">
    <property type="entry name" value="Tail_Z"/>
    <property type="match status" value="1"/>
</dbReference>
<reference key="1">
    <citation type="journal article" date="1982" name="J. Mol. Biol.">
        <title>Nucleotide sequence of bacteriophage lambda DNA.</title>
        <authorList>
            <person name="Sanger F."/>
            <person name="Coulson A.R."/>
            <person name="Hong G.F."/>
            <person name="Hill D.F."/>
            <person name="Petersen G.B."/>
        </authorList>
    </citation>
    <scope>NUCLEOTIDE SEQUENCE [LARGE SCALE GENOMIC DNA]</scope>
</reference>
<reference key="2">
    <citation type="journal article" date="1976" name="J. Mol. Biol.">
        <title>Morphogenesis of bacteriophage lambda tail. Polymorphism in the assembly of the major tail protein.</title>
        <authorList>
            <person name="Katsura I."/>
        </authorList>
    </citation>
    <scope>SUBCELLULAR LOCATION</scope>
</reference>
<protein>
    <recommendedName>
        <fullName>Tail completion protein Z</fullName>
    </recommendedName>
    <alternativeName>
        <fullName>Gene product Z</fullName>
        <shortName>GpZ</shortName>
    </alternativeName>
    <alternativeName>
        <fullName>Minor tail protein Z</fullName>
    </alternativeName>
    <alternativeName>
        <fullName evidence="2">Tail terminator protein</fullName>
    </alternativeName>
</protein>
<organismHost>
    <name type="scientific">Escherichia coli</name>
    <dbReference type="NCBI Taxonomy" id="562"/>
</organismHost>